<feature type="chain" id="PRO_0000362551" description="ATP synthase subunit a, chloroplastic">
    <location>
        <begin position="1"/>
        <end position="247"/>
    </location>
</feature>
<feature type="transmembrane region" description="Helical" evidence="1">
    <location>
        <begin position="38"/>
        <end position="58"/>
    </location>
</feature>
<feature type="transmembrane region" description="Helical" evidence="1">
    <location>
        <begin position="95"/>
        <end position="115"/>
    </location>
</feature>
<feature type="transmembrane region" description="Helical" evidence="1">
    <location>
        <begin position="134"/>
        <end position="154"/>
    </location>
</feature>
<feature type="transmembrane region" description="Helical" evidence="1">
    <location>
        <begin position="199"/>
        <end position="219"/>
    </location>
</feature>
<feature type="transmembrane region" description="Helical" evidence="1">
    <location>
        <begin position="220"/>
        <end position="240"/>
    </location>
</feature>
<accession>Q0G9X4</accession>
<protein>
    <recommendedName>
        <fullName evidence="1">ATP synthase subunit a, chloroplastic</fullName>
    </recommendedName>
    <alternativeName>
        <fullName evidence="1">ATP synthase F0 sector subunit a</fullName>
    </alternativeName>
    <alternativeName>
        <fullName evidence="1">F-ATPase subunit IV</fullName>
    </alternativeName>
</protein>
<keyword id="KW-0066">ATP synthesis</keyword>
<keyword id="KW-0138">CF(0)</keyword>
<keyword id="KW-0150">Chloroplast</keyword>
<keyword id="KW-0375">Hydrogen ion transport</keyword>
<keyword id="KW-0406">Ion transport</keyword>
<keyword id="KW-0472">Membrane</keyword>
<keyword id="KW-0934">Plastid</keyword>
<keyword id="KW-0793">Thylakoid</keyword>
<keyword id="KW-0812">Transmembrane</keyword>
<keyword id="KW-1133">Transmembrane helix</keyword>
<keyword id="KW-0813">Transport</keyword>
<geneLocation type="chloroplast"/>
<name>ATPI_DAUCA</name>
<sequence length="247" mass="27066">MNVLSCSINKLNGLYDISGVEVGQHFYWKIGGFQVHGQVLITSWVVIAILLGSATLAVRNPQTIPTSGQNFFEYVLEFIRDVSKTQIGEEYGPWVPFIGTMFLFIFVSNWSGALLPWKIIQLPHGELAAPTNDINTTVALALLTSVAYFYAGISKKGLGYFGKYIQPTPILLPINILEDFTKPLSLSFRLFGNILADELVVVVLVSLVPLVVPIPVMFLGLFTSGIQALIFATLAAAYIGESMEGHH</sequence>
<reference key="1">
    <citation type="journal article" date="2006" name="BMC Genomics">
        <title>Complete plastid genome sequence of Daucus carota: implications for biotechnology and phylogeny of angiosperms.</title>
        <authorList>
            <person name="Ruhlman T."/>
            <person name="Lee S.-B."/>
            <person name="Jansen R.K."/>
            <person name="Hostetler J.B."/>
            <person name="Tallon L.J."/>
            <person name="Town C.D."/>
            <person name="Daniell H."/>
        </authorList>
    </citation>
    <scope>NUCLEOTIDE SEQUENCE [LARGE SCALE GENOMIC DNA]</scope>
    <source>
        <strain>cv. Danvers Half-long</strain>
    </source>
</reference>
<gene>
    <name evidence="1" type="primary">atpI</name>
</gene>
<evidence type="ECO:0000255" key="1">
    <source>
        <dbReference type="HAMAP-Rule" id="MF_01393"/>
    </source>
</evidence>
<comment type="function">
    <text evidence="1">Key component of the proton channel; it plays a direct role in the translocation of protons across the membrane.</text>
</comment>
<comment type="subunit">
    <text evidence="1">F-type ATPases have 2 components, CF(1) - the catalytic core - and CF(0) - the membrane proton channel. CF(1) has five subunits: alpha(3), beta(3), gamma(1), delta(1), epsilon(1). CF(0) has four main subunits: a, b, b' and c.</text>
</comment>
<comment type="subcellular location">
    <subcellularLocation>
        <location evidence="1">Plastid</location>
        <location evidence="1">Chloroplast thylakoid membrane</location>
        <topology evidence="1">Multi-pass membrane protein</topology>
    </subcellularLocation>
</comment>
<comment type="similarity">
    <text evidence="1">Belongs to the ATPase A chain family.</text>
</comment>
<proteinExistence type="inferred from homology"/>
<organism>
    <name type="scientific">Daucus carota</name>
    <name type="common">Wild carrot</name>
    <dbReference type="NCBI Taxonomy" id="4039"/>
    <lineage>
        <taxon>Eukaryota</taxon>
        <taxon>Viridiplantae</taxon>
        <taxon>Streptophyta</taxon>
        <taxon>Embryophyta</taxon>
        <taxon>Tracheophyta</taxon>
        <taxon>Spermatophyta</taxon>
        <taxon>Magnoliopsida</taxon>
        <taxon>eudicotyledons</taxon>
        <taxon>Gunneridae</taxon>
        <taxon>Pentapetalae</taxon>
        <taxon>asterids</taxon>
        <taxon>campanulids</taxon>
        <taxon>Apiales</taxon>
        <taxon>Apiaceae</taxon>
        <taxon>Apioideae</taxon>
        <taxon>Scandiceae</taxon>
        <taxon>Daucinae</taxon>
        <taxon>Daucus</taxon>
        <taxon>Daucus sect. Daucus</taxon>
    </lineage>
</organism>
<dbReference type="EMBL" id="DQ898156">
    <property type="protein sequence ID" value="ABI32412.1"/>
    <property type="molecule type" value="Genomic_DNA"/>
</dbReference>
<dbReference type="RefSeq" id="YP_740105.1">
    <property type="nucleotide sequence ID" value="NC_008325.1"/>
</dbReference>
<dbReference type="SMR" id="Q0G9X4"/>
<dbReference type="GeneID" id="4266715"/>
<dbReference type="OMA" id="GFFWAAF"/>
<dbReference type="GO" id="GO:0009535">
    <property type="term" value="C:chloroplast thylakoid membrane"/>
    <property type="evidence" value="ECO:0007669"/>
    <property type="project" value="UniProtKB-SubCell"/>
</dbReference>
<dbReference type="GO" id="GO:0005886">
    <property type="term" value="C:plasma membrane"/>
    <property type="evidence" value="ECO:0007669"/>
    <property type="project" value="UniProtKB-UniRule"/>
</dbReference>
<dbReference type="GO" id="GO:0045259">
    <property type="term" value="C:proton-transporting ATP synthase complex"/>
    <property type="evidence" value="ECO:0007669"/>
    <property type="project" value="UniProtKB-KW"/>
</dbReference>
<dbReference type="GO" id="GO:0046933">
    <property type="term" value="F:proton-transporting ATP synthase activity, rotational mechanism"/>
    <property type="evidence" value="ECO:0007669"/>
    <property type="project" value="UniProtKB-UniRule"/>
</dbReference>
<dbReference type="CDD" id="cd00310">
    <property type="entry name" value="ATP-synt_Fo_a_6"/>
    <property type="match status" value="1"/>
</dbReference>
<dbReference type="FunFam" id="1.20.120.220:FF:000001">
    <property type="entry name" value="ATP synthase subunit a, chloroplastic"/>
    <property type="match status" value="1"/>
</dbReference>
<dbReference type="Gene3D" id="1.20.120.220">
    <property type="entry name" value="ATP synthase, F0 complex, subunit A"/>
    <property type="match status" value="1"/>
</dbReference>
<dbReference type="HAMAP" id="MF_01393">
    <property type="entry name" value="ATP_synth_a_bact"/>
    <property type="match status" value="1"/>
</dbReference>
<dbReference type="InterPro" id="IPR045082">
    <property type="entry name" value="ATP_syn_F0_a_bact/chloroplast"/>
</dbReference>
<dbReference type="InterPro" id="IPR000568">
    <property type="entry name" value="ATP_synth_F0_asu"/>
</dbReference>
<dbReference type="InterPro" id="IPR023011">
    <property type="entry name" value="ATP_synth_F0_asu_AS"/>
</dbReference>
<dbReference type="InterPro" id="IPR035908">
    <property type="entry name" value="F0_ATP_A_sf"/>
</dbReference>
<dbReference type="NCBIfam" id="TIGR01131">
    <property type="entry name" value="ATP_synt_6_or_A"/>
    <property type="match status" value="1"/>
</dbReference>
<dbReference type="PANTHER" id="PTHR42823">
    <property type="entry name" value="ATP SYNTHASE SUBUNIT A, CHLOROPLASTIC"/>
    <property type="match status" value="1"/>
</dbReference>
<dbReference type="PANTHER" id="PTHR42823:SF3">
    <property type="entry name" value="ATP SYNTHASE SUBUNIT A, CHLOROPLASTIC"/>
    <property type="match status" value="1"/>
</dbReference>
<dbReference type="Pfam" id="PF00119">
    <property type="entry name" value="ATP-synt_A"/>
    <property type="match status" value="1"/>
</dbReference>
<dbReference type="PRINTS" id="PR00123">
    <property type="entry name" value="ATPASEA"/>
</dbReference>
<dbReference type="SUPFAM" id="SSF81336">
    <property type="entry name" value="F1F0 ATP synthase subunit A"/>
    <property type="match status" value="1"/>
</dbReference>
<dbReference type="PROSITE" id="PS00449">
    <property type="entry name" value="ATPASE_A"/>
    <property type="match status" value="1"/>
</dbReference>